<accession>P14650</accession>
<keyword id="KW-0106">Calcium</keyword>
<keyword id="KW-1015">Disulfide bond</keyword>
<keyword id="KW-0245">EGF-like domain</keyword>
<keyword id="KW-0325">Glycoprotein</keyword>
<keyword id="KW-0349">Heme</keyword>
<keyword id="KW-0376">Hydrogen peroxide</keyword>
<keyword id="KW-0408">Iron</keyword>
<keyword id="KW-0472">Membrane</keyword>
<keyword id="KW-0479">Metal-binding</keyword>
<keyword id="KW-0560">Oxidoreductase</keyword>
<keyword id="KW-0575">Peroxidase</keyword>
<keyword id="KW-1185">Reference proteome</keyword>
<keyword id="KW-0732">Signal</keyword>
<keyword id="KW-0768">Sushi</keyword>
<keyword id="KW-0893">Thyroid hormones biosynthesis</keyword>
<keyword id="KW-0812">Transmembrane</keyword>
<keyword id="KW-1133">Transmembrane helix</keyword>
<name>PERT_RAT</name>
<proteinExistence type="evidence at transcript level"/>
<gene>
    <name type="primary">Tpo</name>
</gene>
<evidence type="ECO:0000250" key="1"/>
<evidence type="ECO:0000250" key="2">
    <source>
        <dbReference type="UniProtKB" id="P09933"/>
    </source>
</evidence>
<evidence type="ECO:0000255" key="3"/>
<evidence type="ECO:0000255" key="4">
    <source>
        <dbReference type="PROSITE-ProRule" id="PRU00076"/>
    </source>
</evidence>
<evidence type="ECO:0000255" key="5">
    <source>
        <dbReference type="PROSITE-ProRule" id="PRU00298"/>
    </source>
</evidence>
<evidence type="ECO:0000255" key="6">
    <source>
        <dbReference type="PROSITE-ProRule" id="PRU00302"/>
    </source>
</evidence>
<evidence type="ECO:0000256" key="7">
    <source>
        <dbReference type="SAM" id="MobiDB-lite"/>
    </source>
</evidence>
<evidence type="ECO:0000305" key="8"/>
<protein>
    <recommendedName>
        <fullName>Thyroid peroxidase</fullName>
        <shortName>TPO</shortName>
        <ecNumber evidence="2">1.11.1.8</ecNumber>
    </recommendedName>
</protein>
<organism>
    <name type="scientific">Rattus norvegicus</name>
    <name type="common">Rat</name>
    <dbReference type="NCBI Taxonomy" id="10116"/>
    <lineage>
        <taxon>Eukaryota</taxon>
        <taxon>Metazoa</taxon>
        <taxon>Chordata</taxon>
        <taxon>Craniata</taxon>
        <taxon>Vertebrata</taxon>
        <taxon>Euteleostomi</taxon>
        <taxon>Mammalia</taxon>
        <taxon>Eutheria</taxon>
        <taxon>Euarchontoglires</taxon>
        <taxon>Glires</taxon>
        <taxon>Rodentia</taxon>
        <taxon>Myomorpha</taxon>
        <taxon>Muroidea</taxon>
        <taxon>Muridae</taxon>
        <taxon>Murinae</taxon>
        <taxon>Rattus</taxon>
    </lineage>
</organism>
<comment type="function">
    <text evidence="2">Iodination and coupling of the hormonogenic tyrosines in thyroglobulin to yield the thyroid hormones T(3) and T(4).</text>
</comment>
<comment type="catalytic activity">
    <reaction evidence="2">
        <text>2 iodide + H2O2 + 2 H(+) = diiodine + 2 H2O</text>
        <dbReference type="Rhea" id="RHEA:23336"/>
        <dbReference type="ChEBI" id="CHEBI:15377"/>
        <dbReference type="ChEBI" id="CHEBI:15378"/>
        <dbReference type="ChEBI" id="CHEBI:16240"/>
        <dbReference type="ChEBI" id="CHEBI:16382"/>
        <dbReference type="ChEBI" id="CHEBI:17606"/>
        <dbReference type="EC" id="1.11.1.8"/>
    </reaction>
</comment>
<comment type="catalytic activity">
    <reaction evidence="2">
        <text>[thyroglobulin]-L-tyrosine + iodide + H2O2 + H(+) = [thyroglobulin]-3-iodo-L-tyrosine + 2 H2O</text>
        <dbReference type="Rhea" id="RHEA:48956"/>
        <dbReference type="Rhea" id="RHEA-COMP:12274"/>
        <dbReference type="Rhea" id="RHEA-COMP:12275"/>
        <dbReference type="ChEBI" id="CHEBI:15377"/>
        <dbReference type="ChEBI" id="CHEBI:15378"/>
        <dbReference type="ChEBI" id="CHEBI:16240"/>
        <dbReference type="ChEBI" id="CHEBI:16382"/>
        <dbReference type="ChEBI" id="CHEBI:46858"/>
        <dbReference type="ChEBI" id="CHEBI:90870"/>
        <dbReference type="EC" id="1.11.1.8"/>
    </reaction>
</comment>
<comment type="catalytic activity">
    <reaction evidence="2">
        <text>[thyroglobulin]-3-iodo-L-tyrosine + iodide + H2O2 + H(+) = [thyroglobulin]-3,5-diiodo-L-tyrosine + 2 H2O</text>
        <dbReference type="Rhea" id="RHEA:48960"/>
        <dbReference type="Rhea" id="RHEA-COMP:12275"/>
        <dbReference type="Rhea" id="RHEA-COMP:12276"/>
        <dbReference type="ChEBI" id="CHEBI:15377"/>
        <dbReference type="ChEBI" id="CHEBI:15378"/>
        <dbReference type="ChEBI" id="CHEBI:16240"/>
        <dbReference type="ChEBI" id="CHEBI:16382"/>
        <dbReference type="ChEBI" id="CHEBI:90870"/>
        <dbReference type="ChEBI" id="CHEBI:90871"/>
        <dbReference type="EC" id="1.11.1.8"/>
    </reaction>
</comment>
<comment type="catalytic activity">
    <reaction evidence="2">
        <text>2 [thyroglobulin]-3,5-diiodo-L-tyrosine + H2O2 = [thyroglobulin]-L-thyroxine + [thyroglobulin]-dehydroalanine + 2 H2O</text>
        <dbReference type="Rhea" id="RHEA:48964"/>
        <dbReference type="Rhea" id="RHEA-COMP:12276"/>
        <dbReference type="Rhea" id="RHEA-COMP:12277"/>
        <dbReference type="Rhea" id="RHEA-COMP:12278"/>
        <dbReference type="ChEBI" id="CHEBI:15377"/>
        <dbReference type="ChEBI" id="CHEBI:16240"/>
        <dbReference type="ChEBI" id="CHEBI:90871"/>
        <dbReference type="ChEBI" id="CHEBI:90872"/>
        <dbReference type="ChEBI" id="CHEBI:90873"/>
        <dbReference type="EC" id="1.11.1.8"/>
    </reaction>
</comment>
<comment type="catalytic activity">
    <reaction evidence="2">
        <text>[thyroglobulin]-3-iodo-L-tyrosine + [thyroglobulin]-3,5-diiodo-L-tyrosine + H2O2 = [thyroglobulin]-3,3',5-triiodo-L-thyronine + [thyroglobulin]-dehydroalanine + 2 H2O</text>
        <dbReference type="Rhea" id="RHEA:48968"/>
        <dbReference type="Rhea" id="RHEA-COMP:12275"/>
        <dbReference type="Rhea" id="RHEA-COMP:12276"/>
        <dbReference type="Rhea" id="RHEA-COMP:12278"/>
        <dbReference type="Rhea" id="RHEA-COMP:12279"/>
        <dbReference type="ChEBI" id="CHEBI:15377"/>
        <dbReference type="ChEBI" id="CHEBI:16240"/>
        <dbReference type="ChEBI" id="CHEBI:90870"/>
        <dbReference type="ChEBI" id="CHEBI:90871"/>
        <dbReference type="ChEBI" id="CHEBI:90873"/>
        <dbReference type="ChEBI" id="CHEBI:90874"/>
        <dbReference type="EC" id="1.11.1.8"/>
    </reaction>
</comment>
<comment type="cofactor">
    <cofactor evidence="5">
        <name>Ca(2+)</name>
        <dbReference type="ChEBI" id="CHEBI:29108"/>
    </cofactor>
    <text evidence="5">Binds 1 Ca(2+) ion per heterodimer.</text>
</comment>
<comment type="cofactor">
    <cofactor evidence="5">
        <name>heme b</name>
        <dbReference type="ChEBI" id="CHEBI:60344"/>
    </cofactor>
    <text evidence="5">Binds 1 heme b (iron(II)-protoporphyrin IX) group covalently per heterodimer.</text>
</comment>
<comment type="pathway">
    <text>Hormone biosynthesis; thyroid hormone biosynthesis.</text>
</comment>
<comment type="subunit">
    <text evidence="1">Interacts with DUOX1, DUOX2 and CYBA.</text>
</comment>
<comment type="subcellular location">
    <subcellularLocation>
        <location evidence="1">Membrane</location>
        <topology evidence="1">Single-pass type I membrane protein</topology>
    </subcellularLocation>
</comment>
<comment type="PTM">
    <text evidence="1">Heme is covalently bound through a H(2)O(2)-dependent autocatalytic process. Heme insertion is important for the delivery of protein at the cell surface (By similarity).</text>
</comment>
<comment type="PTM">
    <text evidence="1">Cleaved in its N-terminal part.</text>
</comment>
<comment type="similarity">
    <text evidence="5">Belongs to the peroxidase family. XPO subfamily.</text>
</comment>
<dbReference type="EC" id="1.11.1.8" evidence="2"/>
<dbReference type="EMBL" id="X17396">
    <property type="protein sequence ID" value="CAA35257.1"/>
    <property type="molecule type" value="mRNA"/>
</dbReference>
<dbReference type="EMBL" id="M31655">
    <property type="protein sequence ID" value="AAA42265.1"/>
    <property type="molecule type" value="mRNA"/>
</dbReference>
<dbReference type="PIR" id="S07047">
    <property type="entry name" value="S07047"/>
</dbReference>
<dbReference type="SMR" id="P14650"/>
<dbReference type="FunCoup" id="P14650">
    <property type="interactions" value="4"/>
</dbReference>
<dbReference type="STRING" id="10116.ENSRNOP00000006526"/>
<dbReference type="PeroxiBase" id="3973">
    <property type="entry name" value="RnoTPO"/>
</dbReference>
<dbReference type="GlyCosmos" id="P14650">
    <property type="glycosylation" value="5 sites, No reported glycans"/>
</dbReference>
<dbReference type="GlyGen" id="P14650">
    <property type="glycosylation" value="5 sites"/>
</dbReference>
<dbReference type="PhosphoSitePlus" id="P14650"/>
<dbReference type="PaxDb" id="10116-ENSRNOP00000006526"/>
<dbReference type="UCSC" id="RGD:3900">
    <property type="organism name" value="rat"/>
</dbReference>
<dbReference type="AGR" id="RGD:3900"/>
<dbReference type="RGD" id="3900">
    <property type="gene designation" value="Tpo"/>
</dbReference>
<dbReference type="eggNOG" id="KOG2408">
    <property type="taxonomic scope" value="Eukaryota"/>
</dbReference>
<dbReference type="InParanoid" id="P14650"/>
<dbReference type="PhylomeDB" id="P14650"/>
<dbReference type="Reactome" id="R-RNO-209968">
    <property type="pathway name" value="Thyroxine biosynthesis"/>
</dbReference>
<dbReference type="UniPathway" id="UPA00194"/>
<dbReference type="PRO" id="PR:P14650"/>
<dbReference type="Proteomes" id="UP000002494">
    <property type="component" value="Unplaced"/>
</dbReference>
<dbReference type="GO" id="GO:0009986">
    <property type="term" value="C:cell surface"/>
    <property type="evidence" value="ECO:0000314"/>
    <property type="project" value="RGD"/>
</dbReference>
<dbReference type="GO" id="GO:0005615">
    <property type="term" value="C:extracellular space"/>
    <property type="evidence" value="ECO:0000318"/>
    <property type="project" value="GO_Central"/>
</dbReference>
<dbReference type="GO" id="GO:0016020">
    <property type="term" value="C:membrane"/>
    <property type="evidence" value="ECO:0007669"/>
    <property type="project" value="UniProtKB-SubCell"/>
</dbReference>
<dbReference type="GO" id="GO:0005509">
    <property type="term" value="F:calcium ion binding"/>
    <property type="evidence" value="ECO:0007669"/>
    <property type="project" value="InterPro"/>
</dbReference>
<dbReference type="GO" id="GO:0020037">
    <property type="term" value="F:heme binding"/>
    <property type="evidence" value="ECO:0007669"/>
    <property type="project" value="InterPro"/>
</dbReference>
<dbReference type="GO" id="GO:0004447">
    <property type="term" value="F:iodide peroxidase activity"/>
    <property type="evidence" value="ECO:0000266"/>
    <property type="project" value="RGD"/>
</dbReference>
<dbReference type="GO" id="GO:0004601">
    <property type="term" value="F:peroxidase activity"/>
    <property type="evidence" value="ECO:0000318"/>
    <property type="project" value="GO_Central"/>
</dbReference>
<dbReference type="GO" id="GO:0071732">
    <property type="term" value="P:cellular response to nitric oxide"/>
    <property type="evidence" value="ECO:0000270"/>
    <property type="project" value="RGD"/>
</dbReference>
<dbReference type="GO" id="GO:0035162">
    <property type="term" value="P:embryonic hemopoiesis"/>
    <property type="evidence" value="ECO:0000266"/>
    <property type="project" value="RGD"/>
</dbReference>
<dbReference type="GO" id="GO:0042446">
    <property type="term" value="P:hormone biosynthetic process"/>
    <property type="evidence" value="ECO:0007669"/>
    <property type="project" value="UniProtKB-KW"/>
</dbReference>
<dbReference type="GO" id="GO:0042744">
    <property type="term" value="P:hydrogen peroxide catabolic process"/>
    <property type="evidence" value="ECO:0007669"/>
    <property type="project" value="UniProtKB-KW"/>
</dbReference>
<dbReference type="GO" id="GO:0033993">
    <property type="term" value="P:response to lipid"/>
    <property type="evidence" value="ECO:0000270"/>
    <property type="project" value="RGD"/>
</dbReference>
<dbReference type="GO" id="GO:0006979">
    <property type="term" value="P:response to oxidative stress"/>
    <property type="evidence" value="ECO:0007669"/>
    <property type="project" value="InterPro"/>
</dbReference>
<dbReference type="GO" id="GO:0006590">
    <property type="term" value="P:thyroid hormone generation"/>
    <property type="evidence" value="ECO:0000266"/>
    <property type="project" value="RGD"/>
</dbReference>
<dbReference type="CDD" id="cd00033">
    <property type="entry name" value="CCP"/>
    <property type="match status" value="1"/>
</dbReference>
<dbReference type="CDD" id="cd00054">
    <property type="entry name" value="EGF_CA"/>
    <property type="match status" value="1"/>
</dbReference>
<dbReference type="CDD" id="cd09825">
    <property type="entry name" value="thyroid_peroxidase"/>
    <property type="match status" value="1"/>
</dbReference>
<dbReference type="FunFam" id="1.10.640.10:FF:000010">
    <property type="entry name" value="Thyroid peroxidase"/>
    <property type="match status" value="1"/>
</dbReference>
<dbReference type="FunFam" id="1.10.640.10:FF:000013">
    <property type="entry name" value="Thyroid peroxidase"/>
    <property type="match status" value="1"/>
</dbReference>
<dbReference type="FunFam" id="2.10.70.10:FF:000059">
    <property type="entry name" value="Thyroid peroxidase"/>
    <property type="match status" value="1"/>
</dbReference>
<dbReference type="FunFam" id="2.10.25.10:FF:000452">
    <property type="entry name" value="thyroid peroxidase"/>
    <property type="match status" value="1"/>
</dbReference>
<dbReference type="Gene3D" id="2.10.70.10">
    <property type="entry name" value="Complement Module, domain 1"/>
    <property type="match status" value="1"/>
</dbReference>
<dbReference type="Gene3D" id="1.10.640.10">
    <property type="entry name" value="Haem peroxidase domain superfamily, animal type"/>
    <property type="match status" value="1"/>
</dbReference>
<dbReference type="Gene3D" id="2.10.25.10">
    <property type="entry name" value="Laminin"/>
    <property type="match status" value="1"/>
</dbReference>
<dbReference type="InterPro" id="IPR001881">
    <property type="entry name" value="EGF-like_Ca-bd_dom"/>
</dbReference>
<dbReference type="InterPro" id="IPR000742">
    <property type="entry name" value="EGF-like_dom"/>
</dbReference>
<dbReference type="InterPro" id="IPR000152">
    <property type="entry name" value="EGF-type_Asp/Asn_hydroxyl_site"/>
</dbReference>
<dbReference type="InterPro" id="IPR018097">
    <property type="entry name" value="EGF_Ca-bd_CS"/>
</dbReference>
<dbReference type="InterPro" id="IPR019791">
    <property type="entry name" value="Haem_peroxidase_animal"/>
</dbReference>
<dbReference type="InterPro" id="IPR010255">
    <property type="entry name" value="Haem_peroxidase_sf"/>
</dbReference>
<dbReference type="InterPro" id="IPR037120">
    <property type="entry name" value="Haem_peroxidase_sf_animal"/>
</dbReference>
<dbReference type="InterPro" id="IPR049883">
    <property type="entry name" value="NOTCH1_EGF-like"/>
</dbReference>
<dbReference type="InterPro" id="IPR035976">
    <property type="entry name" value="Sushi/SCR/CCP_sf"/>
</dbReference>
<dbReference type="InterPro" id="IPR000436">
    <property type="entry name" value="Sushi_SCR_CCP_dom"/>
</dbReference>
<dbReference type="InterPro" id="IPR029589">
    <property type="entry name" value="TPO"/>
</dbReference>
<dbReference type="PANTHER" id="PTHR11475">
    <property type="entry name" value="OXIDASE/PEROXIDASE"/>
    <property type="match status" value="1"/>
</dbReference>
<dbReference type="PANTHER" id="PTHR11475:SF60">
    <property type="entry name" value="THYROID PEROXIDASE"/>
    <property type="match status" value="1"/>
</dbReference>
<dbReference type="Pfam" id="PF03098">
    <property type="entry name" value="An_peroxidase"/>
    <property type="match status" value="1"/>
</dbReference>
<dbReference type="Pfam" id="PF07645">
    <property type="entry name" value="EGF_CA"/>
    <property type="match status" value="1"/>
</dbReference>
<dbReference type="Pfam" id="PF00084">
    <property type="entry name" value="Sushi"/>
    <property type="match status" value="1"/>
</dbReference>
<dbReference type="PRINTS" id="PR00457">
    <property type="entry name" value="ANPEROXIDASE"/>
</dbReference>
<dbReference type="SMART" id="SM00032">
    <property type="entry name" value="CCP"/>
    <property type="match status" value="1"/>
</dbReference>
<dbReference type="SMART" id="SM00181">
    <property type="entry name" value="EGF"/>
    <property type="match status" value="1"/>
</dbReference>
<dbReference type="SMART" id="SM00179">
    <property type="entry name" value="EGF_CA"/>
    <property type="match status" value="1"/>
</dbReference>
<dbReference type="SUPFAM" id="SSF57535">
    <property type="entry name" value="Complement control module/SCR domain"/>
    <property type="match status" value="1"/>
</dbReference>
<dbReference type="SUPFAM" id="SSF57196">
    <property type="entry name" value="EGF/Laminin"/>
    <property type="match status" value="1"/>
</dbReference>
<dbReference type="SUPFAM" id="SSF48113">
    <property type="entry name" value="Heme-dependent peroxidases"/>
    <property type="match status" value="1"/>
</dbReference>
<dbReference type="PROSITE" id="PS00010">
    <property type="entry name" value="ASX_HYDROXYL"/>
    <property type="match status" value="1"/>
</dbReference>
<dbReference type="PROSITE" id="PS01186">
    <property type="entry name" value="EGF_2"/>
    <property type="match status" value="1"/>
</dbReference>
<dbReference type="PROSITE" id="PS50026">
    <property type="entry name" value="EGF_3"/>
    <property type="match status" value="1"/>
</dbReference>
<dbReference type="PROSITE" id="PS01187">
    <property type="entry name" value="EGF_CA"/>
    <property type="match status" value="1"/>
</dbReference>
<dbReference type="PROSITE" id="PS00435">
    <property type="entry name" value="PEROXIDASE_1"/>
    <property type="match status" value="1"/>
</dbReference>
<dbReference type="PROSITE" id="PS50292">
    <property type="entry name" value="PEROXIDASE_3"/>
    <property type="match status" value="1"/>
</dbReference>
<dbReference type="PROSITE" id="PS50923">
    <property type="entry name" value="SUSHI"/>
    <property type="match status" value="1"/>
</dbReference>
<reference key="1">
    <citation type="journal article" date="1989" name="Nucleic Acids Res.">
        <title>Complete nucleotide sequence of the cDNA for thyroid peroxidase in FRTL5 rat thyroid cells.</title>
        <authorList>
            <person name="Derwahl M."/>
            <person name="Seto P."/>
            <person name="Rapoport B."/>
        </authorList>
    </citation>
    <scope>NUCLEOTIDE SEQUENCE [MRNA]</scope>
</reference>
<reference key="2">
    <citation type="journal article" date="1989" name="Mol. Endocrinol.">
        <title>Thyroid peroxidase: rat cDNA sequence, chromosomal localization in mouse, and regulation of gene expression by comparison to thyroglobulin in rat FRTL-5 cells.</title>
        <authorList>
            <person name="Isozaki O."/>
            <person name="Kohn L.D."/>
            <person name="Kozak C.A."/>
            <person name="Kimura S."/>
        </authorList>
    </citation>
    <scope>NUCLEOTIDE SEQUENCE [MRNA] OF 145-914</scope>
</reference>
<feature type="signal peptide" evidence="3">
    <location>
        <begin position="1"/>
        <end position="31"/>
    </location>
</feature>
<feature type="chain" id="PRO_0000023665" description="Thyroid peroxidase">
    <location>
        <begin position="32"/>
        <end position="914"/>
    </location>
</feature>
<feature type="topological domain" description="Extracellular" evidence="3">
    <location>
        <begin position="32"/>
        <end position="834"/>
    </location>
</feature>
<feature type="transmembrane region" description="Helical" evidence="3">
    <location>
        <begin position="835"/>
        <end position="859"/>
    </location>
</feature>
<feature type="topological domain" description="Cytoplasmic" evidence="3">
    <location>
        <begin position="860"/>
        <end position="914"/>
    </location>
</feature>
<feature type="domain" description="Sushi" evidence="6">
    <location>
        <begin position="728"/>
        <end position="783"/>
    </location>
</feature>
<feature type="domain" description="EGF-like; calcium-binding" evidence="4">
    <location>
        <begin position="784"/>
        <end position="827"/>
    </location>
</feature>
<feature type="region of interest" description="Disordered" evidence="7">
    <location>
        <begin position="882"/>
        <end position="907"/>
    </location>
</feature>
<feature type="active site" description="Proton acceptor" evidence="5">
    <location>
        <position position="233"/>
    </location>
</feature>
<feature type="binding site" description="covalent" evidence="1">
    <location>
        <position position="232"/>
    </location>
    <ligand>
        <name>heme b</name>
        <dbReference type="ChEBI" id="CHEBI:60344"/>
    </ligand>
</feature>
<feature type="binding site" evidence="5">
    <location>
        <position position="234"/>
    </location>
    <ligand>
        <name>Ca(2+)</name>
        <dbReference type="ChEBI" id="CHEBI:29108"/>
    </ligand>
</feature>
<feature type="binding site" evidence="5">
    <location>
        <position position="313"/>
    </location>
    <ligand>
        <name>Ca(2+)</name>
        <dbReference type="ChEBI" id="CHEBI:29108"/>
    </ligand>
</feature>
<feature type="binding site" evidence="5">
    <location>
        <position position="315"/>
    </location>
    <ligand>
        <name>Ca(2+)</name>
        <dbReference type="ChEBI" id="CHEBI:29108"/>
    </ligand>
</feature>
<feature type="binding site" evidence="5">
    <location>
        <position position="317"/>
    </location>
    <ligand>
        <name>Ca(2+)</name>
        <dbReference type="ChEBI" id="CHEBI:29108"/>
    </ligand>
</feature>
<feature type="binding site" evidence="5">
    <location>
        <position position="319"/>
    </location>
    <ligand>
        <name>Ca(2+)</name>
        <dbReference type="ChEBI" id="CHEBI:29108"/>
    </ligand>
</feature>
<feature type="binding site" description="covalent" evidence="1">
    <location>
        <position position="387"/>
    </location>
    <ligand>
        <name>heme b</name>
        <dbReference type="ChEBI" id="CHEBI:60344"/>
    </ligand>
</feature>
<feature type="binding site" description="axial binding residue" evidence="5">
    <location>
        <position position="482"/>
    </location>
    <ligand>
        <name>heme b</name>
        <dbReference type="ChEBI" id="CHEBI:60344"/>
    </ligand>
    <ligandPart>
        <name>Fe</name>
        <dbReference type="ChEBI" id="CHEBI:18248"/>
    </ligandPart>
</feature>
<feature type="site" description="Transition state stabilizer" evidence="5">
    <location>
        <position position="384"/>
    </location>
</feature>
<feature type="glycosylation site" description="N-linked (GlcNAc...) asparagine" evidence="3">
    <location>
        <position position="123"/>
    </location>
</feature>
<feature type="glycosylation site" description="N-linked (GlcNAc...) asparagine" evidence="3">
    <location>
        <position position="271"/>
    </location>
</feature>
<feature type="glycosylation site" description="N-linked (GlcNAc...) asparagine" evidence="3">
    <location>
        <position position="299"/>
    </location>
</feature>
<feature type="glycosylation site" description="N-linked (GlcNAc...) asparagine" evidence="3">
    <location>
        <position position="334"/>
    </location>
</feature>
<feature type="glycosylation site" description="N-linked (GlcNAc...) asparagine" evidence="3">
    <location>
        <position position="603"/>
    </location>
</feature>
<feature type="disulfide bond" evidence="1">
    <location>
        <begin position="136"/>
        <end position="152"/>
    </location>
</feature>
<feature type="disulfide bond" evidence="1">
    <location>
        <begin position="253"/>
        <end position="263"/>
    </location>
</feature>
<feature type="disulfide bond" evidence="1">
    <location>
        <begin position="257"/>
        <end position="278"/>
    </location>
</feature>
<feature type="disulfide bond" evidence="1">
    <location>
        <begin position="586"/>
        <end position="643"/>
    </location>
</feature>
<feature type="disulfide bond" evidence="1">
    <location>
        <begin position="684"/>
        <end position="709"/>
    </location>
</feature>
<feature type="disulfide bond" evidence="1">
    <location>
        <begin position="730"/>
        <end position="770"/>
    </location>
</feature>
<feature type="disulfide bond" evidence="1">
    <location>
        <begin position="756"/>
        <end position="782"/>
    </location>
</feature>
<feature type="disulfide bond" evidence="1">
    <location>
        <begin position="788"/>
        <end position="802"/>
    </location>
</feature>
<feature type="disulfide bond" evidence="1">
    <location>
        <begin position="796"/>
        <end position="811"/>
    </location>
</feature>
<feature type="disulfide bond" evidence="1">
    <location>
        <begin position="813"/>
        <end position="826"/>
    </location>
</feature>
<feature type="sequence conflict" description="In Ref. 2; AAA42265." evidence="8" ref="2">
    <original>FP</original>
    <variation>LG</variation>
    <location>
        <begin position="194"/>
        <end position="195"/>
    </location>
</feature>
<feature type="sequence conflict" description="In Ref. 2; AAA42265." evidence="8" ref="2">
    <original>P</original>
    <variation>S</variation>
    <location>
        <position position="198"/>
    </location>
</feature>
<feature type="sequence conflict" description="In Ref. 2; AAA42265." evidence="8" ref="2">
    <original>G</original>
    <variation>A</variation>
    <location>
        <position position="228"/>
    </location>
</feature>
<feature type="sequence conflict" description="In Ref. 2; AAA42265." evidence="8" ref="2">
    <original>DTG</original>
    <variation>ETP</variation>
    <location>
        <begin position="592"/>
        <end position="594"/>
    </location>
</feature>
<sequence>MRTLGAMAVMLVVMGTAIFLPFLLRSRDILGGKTMTSHVISVVETSQLLVDNAVYNTMKRNLKKRGVLSPAQLLSFSKLPESTSGAISRAAEIMETSIQVMKREQSQFSTDALSADILATIANLSGCLPFMLPPRCPDTCLANKYRPITGVCNNRDHPRWGASNTALARWLPPVYEDGFSQPRGWNPNFLYHGFPLPPVREVTRHLIQVSNEAVTEDDQYSDFLPVWGQYIDHDIALTPQSTSTAAFWGGVDCQLTCENQNPCFPIQLPSNSSRTTACLPFYRSSAACGTGDQGALFGNLSAANPRQQMNGLTSFLDASTVYGSSPGVEKQLRNWSSSAGLLRVNTLHLDSGRAYLPFASAACAPEPGAPHANRTPCFLAGDGRASEVPALAAVHTLWLREHNRLATAFKAINTHWSANTAYQEARKVVGALHQIITMRDYIPKILGPDAFRQYVGPYEGYNPTVNPTVSNVFSTAAFRFGHATVHPLVRRLNTDFQDHTELPRLQLHDVFFRPWRLIQEGGLDPIVRGLLARPAKLQVQEQLMNEELTERLFVLSNVGTLDLASLNLQRGRDHGLPGYNEWREFCGLSRLDTGAELNKAIANRSMVNKIMELYKHADNIDVWLGGLAEKFLPGARTGPLFACIIGKQMKALRDGDRFWWENSHVFTDAQRQELEKHSLPRVICDNTGLTRVPVDAFRIGKFPQDFESCEEIPSMDLRLWRETFPQDDKCVFPEKVDNGNFVHCEESGKLVLVYSCFHGYKLQGQEQVTCTQNGWDSEPPVCKDVNECADLTHPPCHSSAKCKNTKGSFQCVCTDPYMLGEDEKTCIDSGRLPRASWVSIALGALLIGGLASLSWTVICRWTHADKKSTLLITERVTMESGFRKSQESGISPQKAEVQDAEQEPAYGSRVLLCE</sequence>